<keyword id="KW-0067">ATP-binding</keyword>
<keyword id="KW-0131">Cell cycle</keyword>
<keyword id="KW-0132">Cell division</keyword>
<keyword id="KW-0133">Cell shape</keyword>
<keyword id="KW-0961">Cell wall biogenesis/degradation</keyword>
<keyword id="KW-0963">Cytoplasm</keyword>
<keyword id="KW-0436">Ligase</keyword>
<keyword id="KW-0547">Nucleotide-binding</keyword>
<keyword id="KW-0573">Peptidoglycan synthesis</keyword>
<dbReference type="EC" id="6.3.2.8" evidence="1"/>
<dbReference type="EMBL" id="CP000436">
    <property type="protein sequence ID" value="ABI24637.1"/>
    <property type="molecule type" value="Genomic_DNA"/>
</dbReference>
<dbReference type="SMR" id="Q0I1D2"/>
<dbReference type="KEGG" id="hso:HS_0359"/>
<dbReference type="eggNOG" id="COG0773">
    <property type="taxonomic scope" value="Bacteria"/>
</dbReference>
<dbReference type="HOGENOM" id="CLU_028104_2_2_6"/>
<dbReference type="UniPathway" id="UPA00219"/>
<dbReference type="GO" id="GO:0005737">
    <property type="term" value="C:cytoplasm"/>
    <property type="evidence" value="ECO:0007669"/>
    <property type="project" value="UniProtKB-SubCell"/>
</dbReference>
<dbReference type="GO" id="GO:0005524">
    <property type="term" value="F:ATP binding"/>
    <property type="evidence" value="ECO:0007669"/>
    <property type="project" value="UniProtKB-UniRule"/>
</dbReference>
<dbReference type="GO" id="GO:0008763">
    <property type="term" value="F:UDP-N-acetylmuramate-L-alanine ligase activity"/>
    <property type="evidence" value="ECO:0007669"/>
    <property type="project" value="UniProtKB-UniRule"/>
</dbReference>
<dbReference type="GO" id="GO:0051301">
    <property type="term" value="P:cell division"/>
    <property type="evidence" value="ECO:0007669"/>
    <property type="project" value="UniProtKB-KW"/>
</dbReference>
<dbReference type="GO" id="GO:0071555">
    <property type="term" value="P:cell wall organization"/>
    <property type="evidence" value="ECO:0007669"/>
    <property type="project" value="UniProtKB-KW"/>
</dbReference>
<dbReference type="GO" id="GO:0009252">
    <property type="term" value="P:peptidoglycan biosynthetic process"/>
    <property type="evidence" value="ECO:0007669"/>
    <property type="project" value="UniProtKB-UniRule"/>
</dbReference>
<dbReference type="GO" id="GO:0008360">
    <property type="term" value="P:regulation of cell shape"/>
    <property type="evidence" value="ECO:0007669"/>
    <property type="project" value="UniProtKB-KW"/>
</dbReference>
<dbReference type="FunFam" id="3.40.1190.10:FF:000001">
    <property type="entry name" value="UDP-N-acetylmuramate--L-alanine ligase"/>
    <property type="match status" value="1"/>
</dbReference>
<dbReference type="FunFam" id="3.40.50.720:FF:000046">
    <property type="entry name" value="UDP-N-acetylmuramate--L-alanine ligase"/>
    <property type="match status" value="1"/>
</dbReference>
<dbReference type="Gene3D" id="3.90.190.20">
    <property type="entry name" value="Mur ligase, C-terminal domain"/>
    <property type="match status" value="1"/>
</dbReference>
<dbReference type="Gene3D" id="3.40.1190.10">
    <property type="entry name" value="Mur-like, catalytic domain"/>
    <property type="match status" value="1"/>
</dbReference>
<dbReference type="Gene3D" id="3.40.50.720">
    <property type="entry name" value="NAD(P)-binding Rossmann-like Domain"/>
    <property type="match status" value="1"/>
</dbReference>
<dbReference type="HAMAP" id="MF_00046">
    <property type="entry name" value="MurC"/>
    <property type="match status" value="1"/>
</dbReference>
<dbReference type="InterPro" id="IPR036565">
    <property type="entry name" value="Mur-like_cat_sf"/>
</dbReference>
<dbReference type="InterPro" id="IPR004101">
    <property type="entry name" value="Mur_ligase_C"/>
</dbReference>
<dbReference type="InterPro" id="IPR036615">
    <property type="entry name" value="Mur_ligase_C_dom_sf"/>
</dbReference>
<dbReference type="InterPro" id="IPR013221">
    <property type="entry name" value="Mur_ligase_cen"/>
</dbReference>
<dbReference type="InterPro" id="IPR000713">
    <property type="entry name" value="Mur_ligase_N"/>
</dbReference>
<dbReference type="InterPro" id="IPR050061">
    <property type="entry name" value="MurCDEF_pg_biosynth"/>
</dbReference>
<dbReference type="InterPro" id="IPR005758">
    <property type="entry name" value="UDP-N-AcMur_Ala_ligase_MurC"/>
</dbReference>
<dbReference type="NCBIfam" id="TIGR01082">
    <property type="entry name" value="murC"/>
    <property type="match status" value="1"/>
</dbReference>
<dbReference type="PANTHER" id="PTHR43445:SF3">
    <property type="entry name" value="UDP-N-ACETYLMURAMATE--L-ALANINE LIGASE"/>
    <property type="match status" value="1"/>
</dbReference>
<dbReference type="PANTHER" id="PTHR43445">
    <property type="entry name" value="UDP-N-ACETYLMURAMATE--L-ALANINE LIGASE-RELATED"/>
    <property type="match status" value="1"/>
</dbReference>
<dbReference type="Pfam" id="PF01225">
    <property type="entry name" value="Mur_ligase"/>
    <property type="match status" value="1"/>
</dbReference>
<dbReference type="Pfam" id="PF02875">
    <property type="entry name" value="Mur_ligase_C"/>
    <property type="match status" value="1"/>
</dbReference>
<dbReference type="Pfam" id="PF08245">
    <property type="entry name" value="Mur_ligase_M"/>
    <property type="match status" value="1"/>
</dbReference>
<dbReference type="SUPFAM" id="SSF51984">
    <property type="entry name" value="MurCD N-terminal domain"/>
    <property type="match status" value="1"/>
</dbReference>
<dbReference type="SUPFAM" id="SSF53623">
    <property type="entry name" value="MurD-like peptide ligases, catalytic domain"/>
    <property type="match status" value="1"/>
</dbReference>
<dbReference type="SUPFAM" id="SSF53244">
    <property type="entry name" value="MurD-like peptide ligases, peptide-binding domain"/>
    <property type="match status" value="1"/>
</dbReference>
<comment type="function">
    <text evidence="1">Cell wall formation.</text>
</comment>
<comment type="catalytic activity">
    <reaction evidence="1">
        <text>UDP-N-acetyl-alpha-D-muramate + L-alanine + ATP = UDP-N-acetyl-alpha-D-muramoyl-L-alanine + ADP + phosphate + H(+)</text>
        <dbReference type="Rhea" id="RHEA:23372"/>
        <dbReference type="ChEBI" id="CHEBI:15378"/>
        <dbReference type="ChEBI" id="CHEBI:30616"/>
        <dbReference type="ChEBI" id="CHEBI:43474"/>
        <dbReference type="ChEBI" id="CHEBI:57972"/>
        <dbReference type="ChEBI" id="CHEBI:70757"/>
        <dbReference type="ChEBI" id="CHEBI:83898"/>
        <dbReference type="ChEBI" id="CHEBI:456216"/>
        <dbReference type="EC" id="6.3.2.8"/>
    </reaction>
</comment>
<comment type="pathway">
    <text evidence="1">Cell wall biogenesis; peptidoglycan biosynthesis.</text>
</comment>
<comment type="subcellular location">
    <subcellularLocation>
        <location evidence="1">Cytoplasm</location>
    </subcellularLocation>
</comment>
<comment type="similarity">
    <text evidence="1">Belongs to the MurCDEF family.</text>
</comment>
<accession>Q0I1D2</accession>
<reference key="1">
    <citation type="journal article" date="2007" name="J. Bacteriol.">
        <title>Complete genome sequence of Haemophilus somnus (Histophilus somni) strain 129Pt and comparison to Haemophilus ducreyi 35000HP and Haemophilus influenzae Rd.</title>
        <authorList>
            <person name="Challacombe J.F."/>
            <person name="Duncan A.J."/>
            <person name="Brettin T.S."/>
            <person name="Bruce D."/>
            <person name="Chertkov O."/>
            <person name="Detter J.C."/>
            <person name="Han C.S."/>
            <person name="Misra M."/>
            <person name="Richardson P."/>
            <person name="Tapia R."/>
            <person name="Thayer N."/>
            <person name="Xie G."/>
            <person name="Inzana T.J."/>
        </authorList>
    </citation>
    <scope>NUCLEOTIDE SEQUENCE [LARGE SCALE GENOMIC DNA]</scope>
    <source>
        <strain>129Pt</strain>
    </source>
</reference>
<name>MURC_HISS1</name>
<organism>
    <name type="scientific">Histophilus somni (strain 129Pt)</name>
    <name type="common">Haemophilus somnus</name>
    <dbReference type="NCBI Taxonomy" id="205914"/>
    <lineage>
        <taxon>Bacteria</taxon>
        <taxon>Pseudomonadati</taxon>
        <taxon>Pseudomonadota</taxon>
        <taxon>Gammaproteobacteria</taxon>
        <taxon>Pasteurellales</taxon>
        <taxon>Pasteurellaceae</taxon>
        <taxon>Histophilus</taxon>
    </lineage>
</organism>
<feature type="chain" id="PRO_1000071095" description="UDP-N-acetylmuramate--L-alanine ligase">
    <location>
        <begin position="1"/>
        <end position="476"/>
    </location>
</feature>
<feature type="binding site" evidence="1">
    <location>
        <begin position="125"/>
        <end position="131"/>
    </location>
    <ligand>
        <name>ATP</name>
        <dbReference type="ChEBI" id="CHEBI:30616"/>
    </ligand>
</feature>
<sequence length="476" mass="52215">MQAFRQRIRQTVPEMRRVKQIHFVGIGGAGMGGIAEVLLNEGYQVTGSDIAESAVTSRLISLGAKISFSHHAENIEGASVVVVSSAIKGDNIEVITAHEKRIPVIQRAQMLAEIMRFRHGIAIAGTHGKTTTTAMVAMIYAQAGLDPTFVNGGLVKSAGTNAYLGCSRYLIAEADESDASFLHLQPMVSVVTNIEPEHMETYHGDFEEMKQTYVNFLRNLPFYGLSVMCADDPVLMELSSQVGRQVVTYGFSDEADYRIEDYQQTGFQGHYTVVAPNGERIDVLLNVPGKHNALNATAALTVAKEEGIENEAILTALAEFQGAGRRFDQLGQFIRPNGKVMLVDDYGHHPTEVNVTIQAARQGWENKRIVMIFQPHRYSRTRDLFDDFVQVLSQVDVLIMLDVYAAGEQAIAGADSRSLCRSIRNLGKVDPILVSDHKQLAEIVDQVIQDGDLILAQGAGNVSKLSRELALAWGKE</sequence>
<protein>
    <recommendedName>
        <fullName evidence="1">UDP-N-acetylmuramate--L-alanine ligase</fullName>
        <ecNumber evidence="1">6.3.2.8</ecNumber>
    </recommendedName>
    <alternativeName>
        <fullName evidence="1">UDP-N-acetylmuramoyl-L-alanine synthetase</fullName>
    </alternativeName>
</protein>
<evidence type="ECO:0000255" key="1">
    <source>
        <dbReference type="HAMAP-Rule" id="MF_00046"/>
    </source>
</evidence>
<proteinExistence type="inferred from homology"/>
<gene>
    <name evidence="1" type="primary">murC</name>
    <name type="ordered locus">HS_0359</name>
</gene>